<keyword id="KW-1185">Reference proteome</keyword>
<protein>
    <recommendedName>
        <fullName>Glutathione S-transferase domain-containing protein DDB_G0274223</fullName>
    </recommendedName>
</protein>
<name>Y4223_DICDI</name>
<dbReference type="EMBL" id="AAFI02000012">
    <property type="protein sequence ID" value="EAL70004.1"/>
    <property type="molecule type" value="Genomic_DNA"/>
</dbReference>
<dbReference type="RefSeq" id="XP_644245.1">
    <property type="nucleotide sequence ID" value="XM_639153.1"/>
</dbReference>
<dbReference type="SMR" id="Q8SSU2"/>
<dbReference type="STRING" id="44689.Q8SSU2"/>
<dbReference type="PaxDb" id="44689-DDB0304357"/>
<dbReference type="EnsemblProtists" id="EAL70004">
    <property type="protein sequence ID" value="EAL70004"/>
    <property type="gene ID" value="DDB_G0274223"/>
</dbReference>
<dbReference type="GeneID" id="8619673"/>
<dbReference type="KEGG" id="ddi:DDB_G0274223"/>
<dbReference type="dictyBase" id="DDB_G0274223"/>
<dbReference type="VEuPathDB" id="AmoebaDB:DDB_G0274223"/>
<dbReference type="eggNOG" id="KOG0867">
    <property type="taxonomic scope" value="Eukaryota"/>
</dbReference>
<dbReference type="HOGENOM" id="CLU_011226_14_4_1"/>
<dbReference type="InParanoid" id="Q8SSU2"/>
<dbReference type="OMA" id="GHSGAEY"/>
<dbReference type="PhylomeDB" id="Q8SSU2"/>
<dbReference type="PRO" id="PR:Q8SSU2"/>
<dbReference type="Proteomes" id="UP000002195">
    <property type="component" value="Chromosome 2"/>
</dbReference>
<dbReference type="GO" id="GO:0005737">
    <property type="term" value="C:cytoplasm"/>
    <property type="evidence" value="ECO:0000318"/>
    <property type="project" value="GO_Central"/>
</dbReference>
<dbReference type="GO" id="GO:0004364">
    <property type="term" value="F:glutathione transferase activity"/>
    <property type="evidence" value="ECO:0000318"/>
    <property type="project" value="GO_Central"/>
</dbReference>
<dbReference type="CDD" id="cd03178">
    <property type="entry name" value="GST_C_Ure2p_like"/>
    <property type="match status" value="1"/>
</dbReference>
<dbReference type="CDD" id="cd03048">
    <property type="entry name" value="GST_N_Ure2p_like"/>
    <property type="match status" value="1"/>
</dbReference>
<dbReference type="Gene3D" id="1.20.1050.10">
    <property type="match status" value="1"/>
</dbReference>
<dbReference type="Gene3D" id="3.40.30.10">
    <property type="entry name" value="Glutaredoxin"/>
    <property type="match status" value="1"/>
</dbReference>
<dbReference type="InterPro" id="IPR010987">
    <property type="entry name" value="Glutathione-S-Trfase_C-like"/>
</dbReference>
<dbReference type="InterPro" id="IPR036282">
    <property type="entry name" value="Glutathione-S-Trfase_C_sf"/>
</dbReference>
<dbReference type="InterPro" id="IPR040079">
    <property type="entry name" value="Glutathione_S-Trfase"/>
</dbReference>
<dbReference type="InterPro" id="IPR004045">
    <property type="entry name" value="Glutathione_S-Trfase_N"/>
</dbReference>
<dbReference type="InterPro" id="IPR004046">
    <property type="entry name" value="GST_C"/>
</dbReference>
<dbReference type="InterPro" id="IPR036249">
    <property type="entry name" value="Thioredoxin-like_sf"/>
</dbReference>
<dbReference type="PANTHER" id="PTHR44051">
    <property type="entry name" value="GLUTATHIONE S-TRANSFERASE-RELATED"/>
    <property type="match status" value="1"/>
</dbReference>
<dbReference type="PANTHER" id="PTHR44051:SF16">
    <property type="entry name" value="GLUTATHIONE S-TRANSFERASE-RELATED"/>
    <property type="match status" value="1"/>
</dbReference>
<dbReference type="Pfam" id="PF00043">
    <property type="entry name" value="GST_C"/>
    <property type="match status" value="1"/>
</dbReference>
<dbReference type="Pfam" id="PF02798">
    <property type="entry name" value="GST_N"/>
    <property type="match status" value="1"/>
</dbReference>
<dbReference type="SFLD" id="SFLDS00019">
    <property type="entry name" value="Glutathione_Transferase_(cytos"/>
    <property type="match status" value="1"/>
</dbReference>
<dbReference type="SFLD" id="SFLDG01151">
    <property type="entry name" value="Main.2:_Nu-like"/>
    <property type="match status" value="1"/>
</dbReference>
<dbReference type="SUPFAM" id="SSF47616">
    <property type="entry name" value="GST C-terminal domain-like"/>
    <property type="match status" value="1"/>
</dbReference>
<dbReference type="SUPFAM" id="SSF52833">
    <property type="entry name" value="Thioredoxin-like"/>
    <property type="match status" value="1"/>
</dbReference>
<dbReference type="PROSITE" id="PS50405">
    <property type="entry name" value="GST_CTER"/>
    <property type="match status" value="1"/>
</dbReference>
<dbReference type="PROSITE" id="PS50404">
    <property type="entry name" value="GST_NTER"/>
    <property type="match status" value="1"/>
</dbReference>
<gene>
    <name type="ORF">DDB_G0274223</name>
</gene>
<accession>Q8SSU2</accession>
<accession>Q554S8</accession>
<sequence length="260" mass="30155">MIEINNKVDYIFYTNNTPNTYKIKLILLELEKKHSITFESRYINITKKENYSDEFVKINPNKKVPAIVDQTGEKPFVVFESVSILIYLAQKYNTFLPDFKTNPHENSDVITWAVWQAANLGPAFGQYFHFSYFSPTVQEYSLHRFNNEAQRVLRLLDDRLSVSQYIGGNEFSIADIASAGWLLYLNFAPIYKATKERFPHIFKWLDLINQRDAVKEINQSISEGFKTFNPSALRALFTDDPELINAKAPIGIENVVLKYD</sequence>
<reference key="1">
    <citation type="journal article" date="2002" name="Nature">
        <title>Sequence and analysis of chromosome 2 of Dictyostelium discoideum.</title>
        <authorList>
            <person name="Gloeckner G."/>
            <person name="Eichinger L."/>
            <person name="Szafranski K."/>
            <person name="Pachebat J.A."/>
            <person name="Bankier A.T."/>
            <person name="Dear P.H."/>
            <person name="Lehmann R."/>
            <person name="Baumgart C."/>
            <person name="Parra G."/>
            <person name="Abril J.F."/>
            <person name="Guigo R."/>
            <person name="Kumpf K."/>
            <person name="Tunggal B."/>
            <person name="Cox E.C."/>
            <person name="Quail M.A."/>
            <person name="Platzer M."/>
            <person name="Rosenthal A."/>
            <person name="Noegel A.A."/>
        </authorList>
    </citation>
    <scope>NUCLEOTIDE SEQUENCE [LARGE SCALE GENOMIC DNA]</scope>
    <source>
        <strain>AX4</strain>
    </source>
</reference>
<reference key="2">
    <citation type="journal article" date="2005" name="Nature">
        <title>The genome of the social amoeba Dictyostelium discoideum.</title>
        <authorList>
            <person name="Eichinger L."/>
            <person name="Pachebat J.A."/>
            <person name="Gloeckner G."/>
            <person name="Rajandream M.A."/>
            <person name="Sucgang R."/>
            <person name="Berriman M."/>
            <person name="Song J."/>
            <person name="Olsen R."/>
            <person name="Szafranski K."/>
            <person name="Xu Q."/>
            <person name="Tunggal B."/>
            <person name="Kummerfeld S."/>
            <person name="Madera M."/>
            <person name="Konfortov B.A."/>
            <person name="Rivero F."/>
            <person name="Bankier A.T."/>
            <person name="Lehmann R."/>
            <person name="Hamlin N."/>
            <person name="Davies R."/>
            <person name="Gaudet P."/>
            <person name="Fey P."/>
            <person name="Pilcher K."/>
            <person name="Chen G."/>
            <person name="Saunders D."/>
            <person name="Sodergren E.J."/>
            <person name="Davis P."/>
            <person name="Kerhornou A."/>
            <person name="Nie X."/>
            <person name="Hall N."/>
            <person name="Anjard C."/>
            <person name="Hemphill L."/>
            <person name="Bason N."/>
            <person name="Farbrother P."/>
            <person name="Desany B."/>
            <person name="Just E."/>
            <person name="Morio T."/>
            <person name="Rost R."/>
            <person name="Churcher C.M."/>
            <person name="Cooper J."/>
            <person name="Haydock S."/>
            <person name="van Driessche N."/>
            <person name="Cronin A."/>
            <person name="Goodhead I."/>
            <person name="Muzny D.M."/>
            <person name="Mourier T."/>
            <person name="Pain A."/>
            <person name="Lu M."/>
            <person name="Harper D."/>
            <person name="Lindsay R."/>
            <person name="Hauser H."/>
            <person name="James K.D."/>
            <person name="Quiles M."/>
            <person name="Madan Babu M."/>
            <person name="Saito T."/>
            <person name="Buchrieser C."/>
            <person name="Wardroper A."/>
            <person name="Felder M."/>
            <person name="Thangavelu M."/>
            <person name="Johnson D."/>
            <person name="Knights A."/>
            <person name="Loulseged H."/>
            <person name="Mungall K.L."/>
            <person name="Oliver K."/>
            <person name="Price C."/>
            <person name="Quail M.A."/>
            <person name="Urushihara H."/>
            <person name="Hernandez J."/>
            <person name="Rabbinowitsch E."/>
            <person name="Steffen D."/>
            <person name="Sanders M."/>
            <person name="Ma J."/>
            <person name="Kohara Y."/>
            <person name="Sharp S."/>
            <person name="Simmonds M.N."/>
            <person name="Spiegler S."/>
            <person name="Tivey A."/>
            <person name="Sugano S."/>
            <person name="White B."/>
            <person name="Walker D."/>
            <person name="Woodward J.R."/>
            <person name="Winckler T."/>
            <person name="Tanaka Y."/>
            <person name="Shaulsky G."/>
            <person name="Schleicher M."/>
            <person name="Weinstock G.M."/>
            <person name="Rosenthal A."/>
            <person name="Cox E.C."/>
            <person name="Chisholm R.L."/>
            <person name="Gibbs R.A."/>
            <person name="Loomis W.F."/>
            <person name="Platzer M."/>
            <person name="Kay R.R."/>
            <person name="Williams J.G."/>
            <person name="Dear P.H."/>
            <person name="Noegel A.A."/>
            <person name="Barrell B.G."/>
            <person name="Kuspa A."/>
        </authorList>
    </citation>
    <scope>NUCLEOTIDE SEQUENCE [LARGE SCALE GENOMIC DNA]</scope>
    <source>
        <strain>AX4</strain>
    </source>
</reference>
<comment type="similarity">
    <text evidence="1">Belongs to the GST superfamily.</text>
</comment>
<proteinExistence type="inferred from homology"/>
<evidence type="ECO:0000305" key="1"/>
<feature type="chain" id="PRO_0000363845" description="Glutathione S-transferase domain-containing protein DDB_G0274223">
    <location>
        <begin position="1"/>
        <end position="260"/>
    </location>
</feature>
<feature type="domain" description="GST N-terminal">
    <location>
        <begin position="7"/>
        <end position="96"/>
    </location>
</feature>
<feature type="domain" description="GST C-terminal">
    <location>
        <begin position="102"/>
        <end position="233"/>
    </location>
</feature>
<organism>
    <name type="scientific">Dictyostelium discoideum</name>
    <name type="common">Social amoeba</name>
    <dbReference type="NCBI Taxonomy" id="44689"/>
    <lineage>
        <taxon>Eukaryota</taxon>
        <taxon>Amoebozoa</taxon>
        <taxon>Evosea</taxon>
        <taxon>Eumycetozoa</taxon>
        <taxon>Dictyostelia</taxon>
        <taxon>Dictyosteliales</taxon>
        <taxon>Dictyosteliaceae</taxon>
        <taxon>Dictyostelium</taxon>
    </lineage>
</organism>